<evidence type="ECO:0000255" key="1">
    <source>
        <dbReference type="HAMAP-Rule" id="MF_01310"/>
    </source>
</evidence>
<evidence type="ECO:0000305" key="2"/>
<sequence>MAKKTVAAKKRNVKVDAYGQAHIHSSFNNIIVSLANSEGQVISWSSAGKMGFRSSKKNTPYAAQMAAQDCAKVAYDLGLRKVKVFVKGPGNGRESAIRTIHGAGIEVTEIVDVTPLPHNGCRPPKKRRV</sequence>
<proteinExistence type="inferred from homology"/>
<protein>
    <recommendedName>
        <fullName evidence="1">Small ribosomal subunit protein uS11</fullName>
    </recommendedName>
    <alternativeName>
        <fullName evidence="2">30S ribosomal protein S11</fullName>
    </alternativeName>
</protein>
<feature type="chain" id="PRO_1000051843" description="Small ribosomal subunit protein uS11">
    <location>
        <begin position="1"/>
        <end position="129"/>
    </location>
</feature>
<accession>A6LEG7</accession>
<dbReference type="EMBL" id="CP000140">
    <property type="protein sequence ID" value="ABR44081.1"/>
    <property type="molecule type" value="Genomic_DNA"/>
</dbReference>
<dbReference type="RefSeq" id="WP_005634781.1">
    <property type="nucleotide sequence ID" value="NZ_LR215978.1"/>
</dbReference>
<dbReference type="SMR" id="A6LEG7"/>
<dbReference type="STRING" id="435591.BDI_2356"/>
<dbReference type="PaxDb" id="435591-BDI_2356"/>
<dbReference type="GeneID" id="93522348"/>
<dbReference type="KEGG" id="pdi:BDI_2356"/>
<dbReference type="eggNOG" id="COG0100">
    <property type="taxonomic scope" value="Bacteria"/>
</dbReference>
<dbReference type="HOGENOM" id="CLU_072439_5_0_10"/>
<dbReference type="BioCyc" id="PDIS435591:G1G5A-2420-MONOMER"/>
<dbReference type="Proteomes" id="UP000000566">
    <property type="component" value="Chromosome"/>
</dbReference>
<dbReference type="GO" id="GO:1990904">
    <property type="term" value="C:ribonucleoprotein complex"/>
    <property type="evidence" value="ECO:0007669"/>
    <property type="project" value="UniProtKB-KW"/>
</dbReference>
<dbReference type="GO" id="GO:0005840">
    <property type="term" value="C:ribosome"/>
    <property type="evidence" value="ECO:0007669"/>
    <property type="project" value="UniProtKB-KW"/>
</dbReference>
<dbReference type="GO" id="GO:0019843">
    <property type="term" value="F:rRNA binding"/>
    <property type="evidence" value="ECO:0007669"/>
    <property type="project" value="UniProtKB-UniRule"/>
</dbReference>
<dbReference type="GO" id="GO:0003735">
    <property type="term" value="F:structural constituent of ribosome"/>
    <property type="evidence" value="ECO:0007669"/>
    <property type="project" value="InterPro"/>
</dbReference>
<dbReference type="GO" id="GO:0006412">
    <property type="term" value="P:translation"/>
    <property type="evidence" value="ECO:0007669"/>
    <property type="project" value="UniProtKB-UniRule"/>
</dbReference>
<dbReference type="FunFam" id="3.30.420.80:FF:000004">
    <property type="entry name" value="30S ribosomal protein S11"/>
    <property type="match status" value="1"/>
</dbReference>
<dbReference type="Gene3D" id="3.30.420.80">
    <property type="entry name" value="Ribosomal protein S11"/>
    <property type="match status" value="1"/>
</dbReference>
<dbReference type="HAMAP" id="MF_01310">
    <property type="entry name" value="Ribosomal_uS11"/>
    <property type="match status" value="1"/>
</dbReference>
<dbReference type="InterPro" id="IPR001971">
    <property type="entry name" value="Ribosomal_uS11"/>
</dbReference>
<dbReference type="InterPro" id="IPR019981">
    <property type="entry name" value="Ribosomal_uS11_bac-type"/>
</dbReference>
<dbReference type="InterPro" id="IPR018102">
    <property type="entry name" value="Ribosomal_uS11_CS"/>
</dbReference>
<dbReference type="InterPro" id="IPR036967">
    <property type="entry name" value="Ribosomal_uS11_sf"/>
</dbReference>
<dbReference type="NCBIfam" id="NF003698">
    <property type="entry name" value="PRK05309.1"/>
    <property type="match status" value="1"/>
</dbReference>
<dbReference type="NCBIfam" id="TIGR03632">
    <property type="entry name" value="uS11_bact"/>
    <property type="match status" value="1"/>
</dbReference>
<dbReference type="PANTHER" id="PTHR11759">
    <property type="entry name" value="40S RIBOSOMAL PROTEIN S14/30S RIBOSOMAL PROTEIN S11"/>
    <property type="match status" value="1"/>
</dbReference>
<dbReference type="Pfam" id="PF00411">
    <property type="entry name" value="Ribosomal_S11"/>
    <property type="match status" value="1"/>
</dbReference>
<dbReference type="PIRSF" id="PIRSF002131">
    <property type="entry name" value="Ribosomal_S11"/>
    <property type="match status" value="1"/>
</dbReference>
<dbReference type="SUPFAM" id="SSF53137">
    <property type="entry name" value="Translational machinery components"/>
    <property type="match status" value="1"/>
</dbReference>
<dbReference type="PROSITE" id="PS00054">
    <property type="entry name" value="RIBOSOMAL_S11"/>
    <property type="match status" value="1"/>
</dbReference>
<organism>
    <name type="scientific">Parabacteroides distasonis (strain ATCC 8503 / DSM 20701 / CIP 104284 / JCM 5825 / NCTC 11152)</name>
    <dbReference type="NCBI Taxonomy" id="435591"/>
    <lineage>
        <taxon>Bacteria</taxon>
        <taxon>Pseudomonadati</taxon>
        <taxon>Bacteroidota</taxon>
        <taxon>Bacteroidia</taxon>
        <taxon>Bacteroidales</taxon>
        <taxon>Tannerellaceae</taxon>
        <taxon>Parabacteroides</taxon>
    </lineage>
</organism>
<name>RS11_PARD8</name>
<comment type="function">
    <text evidence="1">Located on the platform of the 30S subunit, it bridges several disparate RNA helices of the 16S rRNA. Forms part of the Shine-Dalgarno cleft in the 70S ribosome.</text>
</comment>
<comment type="subunit">
    <text evidence="1">Part of the 30S ribosomal subunit. Interacts with proteins S7 and S18. Binds to IF-3.</text>
</comment>
<comment type="similarity">
    <text evidence="1">Belongs to the universal ribosomal protein uS11 family.</text>
</comment>
<gene>
    <name evidence="1" type="primary">rpsK</name>
    <name type="ordered locus">BDI_2356</name>
</gene>
<keyword id="KW-1185">Reference proteome</keyword>
<keyword id="KW-0687">Ribonucleoprotein</keyword>
<keyword id="KW-0689">Ribosomal protein</keyword>
<keyword id="KW-0694">RNA-binding</keyword>
<keyword id="KW-0699">rRNA-binding</keyword>
<reference key="1">
    <citation type="journal article" date="2007" name="PLoS Biol.">
        <title>Evolution of symbiotic bacteria in the distal human intestine.</title>
        <authorList>
            <person name="Xu J."/>
            <person name="Mahowald M.A."/>
            <person name="Ley R.E."/>
            <person name="Lozupone C.A."/>
            <person name="Hamady M."/>
            <person name="Martens E.C."/>
            <person name="Henrissat B."/>
            <person name="Coutinho P.M."/>
            <person name="Minx P."/>
            <person name="Latreille P."/>
            <person name="Cordum H."/>
            <person name="Van Brunt A."/>
            <person name="Kim K."/>
            <person name="Fulton R.S."/>
            <person name="Fulton L.A."/>
            <person name="Clifton S.W."/>
            <person name="Wilson R.K."/>
            <person name="Knight R.D."/>
            <person name="Gordon J.I."/>
        </authorList>
    </citation>
    <scope>NUCLEOTIDE SEQUENCE [LARGE SCALE GENOMIC DNA]</scope>
    <source>
        <strain>ATCC 8503 / DSM 20701 / CIP 104284 / JCM 5825 / NCTC 11152</strain>
    </source>
</reference>